<dbReference type="EMBL" id="CP000414">
    <property type="protein sequence ID" value="ABJ61345.1"/>
    <property type="molecule type" value="Genomic_DNA"/>
</dbReference>
<dbReference type="RefSeq" id="WP_010292117.1">
    <property type="nucleotide sequence ID" value="NC_008531.1"/>
</dbReference>
<dbReference type="SMR" id="Q03ZM7"/>
<dbReference type="EnsemblBacteria" id="ABJ61345">
    <property type="protein sequence ID" value="ABJ61345"/>
    <property type="gene ID" value="LEUM_0214"/>
</dbReference>
<dbReference type="GeneID" id="29577477"/>
<dbReference type="KEGG" id="lme:LEUM_0214"/>
<dbReference type="eggNOG" id="COG0200">
    <property type="taxonomic scope" value="Bacteria"/>
</dbReference>
<dbReference type="HOGENOM" id="CLU_055188_4_2_9"/>
<dbReference type="Proteomes" id="UP000000362">
    <property type="component" value="Chromosome"/>
</dbReference>
<dbReference type="GO" id="GO:0022625">
    <property type="term" value="C:cytosolic large ribosomal subunit"/>
    <property type="evidence" value="ECO:0007669"/>
    <property type="project" value="TreeGrafter"/>
</dbReference>
<dbReference type="GO" id="GO:0019843">
    <property type="term" value="F:rRNA binding"/>
    <property type="evidence" value="ECO:0007669"/>
    <property type="project" value="UniProtKB-UniRule"/>
</dbReference>
<dbReference type="GO" id="GO:0003735">
    <property type="term" value="F:structural constituent of ribosome"/>
    <property type="evidence" value="ECO:0007669"/>
    <property type="project" value="InterPro"/>
</dbReference>
<dbReference type="GO" id="GO:0006412">
    <property type="term" value="P:translation"/>
    <property type="evidence" value="ECO:0007669"/>
    <property type="project" value="UniProtKB-UniRule"/>
</dbReference>
<dbReference type="Gene3D" id="3.100.10.10">
    <property type="match status" value="1"/>
</dbReference>
<dbReference type="HAMAP" id="MF_01341">
    <property type="entry name" value="Ribosomal_uL15"/>
    <property type="match status" value="1"/>
</dbReference>
<dbReference type="InterPro" id="IPR030878">
    <property type="entry name" value="Ribosomal_uL15"/>
</dbReference>
<dbReference type="InterPro" id="IPR021131">
    <property type="entry name" value="Ribosomal_uL15/eL18"/>
</dbReference>
<dbReference type="InterPro" id="IPR036227">
    <property type="entry name" value="Ribosomal_uL15/eL18_sf"/>
</dbReference>
<dbReference type="InterPro" id="IPR005749">
    <property type="entry name" value="Ribosomal_uL15_bac-type"/>
</dbReference>
<dbReference type="InterPro" id="IPR001196">
    <property type="entry name" value="Ribosomal_uL15_CS"/>
</dbReference>
<dbReference type="NCBIfam" id="TIGR01071">
    <property type="entry name" value="rplO_bact"/>
    <property type="match status" value="1"/>
</dbReference>
<dbReference type="PANTHER" id="PTHR12934">
    <property type="entry name" value="50S RIBOSOMAL PROTEIN L15"/>
    <property type="match status" value="1"/>
</dbReference>
<dbReference type="PANTHER" id="PTHR12934:SF11">
    <property type="entry name" value="LARGE RIBOSOMAL SUBUNIT PROTEIN UL15M"/>
    <property type="match status" value="1"/>
</dbReference>
<dbReference type="Pfam" id="PF00828">
    <property type="entry name" value="Ribosomal_L27A"/>
    <property type="match status" value="1"/>
</dbReference>
<dbReference type="SUPFAM" id="SSF52080">
    <property type="entry name" value="Ribosomal proteins L15p and L18e"/>
    <property type="match status" value="1"/>
</dbReference>
<dbReference type="PROSITE" id="PS00475">
    <property type="entry name" value="RIBOSOMAL_L15"/>
    <property type="match status" value="1"/>
</dbReference>
<comment type="function">
    <text evidence="1">Binds to the 23S rRNA.</text>
</comment>
<comment type="subunit">
    <text evidence="1">Part of the 50S ribosomal subunit.</text>
</comment>
<comment type="similarity">
    <text evidence="1">Belongs to the universal ribosomal protein uL15 family.</text>
</comment>
<protein>
    <recommendedName>
        <fullName evidence="1">Large ribosomal subunit protein uL15</fullName>
    </recommendedName>
    <alternativeName>
        <fullName evidence="3">50S ribosomal protein L15</fullName>
    </alternativeName>
</protein>
<gene>
    <name evidence="1" type="primary">rplO</name>
    <name type="ordered locus">LEUM_0214</name>
</gene>
<evidence type="ECO:0000255" key="1">
    <source>
        <dbReference type="HAMAP-Rule" id="MF_01341"/>
    </source>
</evidence>
<evidence type="ECO:0000256" key="2">
    <source>
        <dbReference type="SAM" id="MobiDB-lite"/>
    </source>
</evidence>
<evidence type="ECO:0000305" key="3"/>
<proteinExistence type="inferred from homology"/>
<organism>
    <name type="scientific">Leuconostoc mesenteroides subsp. mesenteroides (strain ATCC 8293 / DSM 20343 / BCRC 11652 / CCM 1803 / JCM 6124 / NCDO 523 / NBRC 100496 / NCIMB 8023 / NCTC 12954 / NRRL B-1118 / 37Y)</name>
    <dbReference type="NCBI Taxonomy" id="203120"/>
    <lineage>
        <taxon>Bacteria</taxon>
        <taxon>Bacillati</taxon>
        <taxon>Bacillota</taxon>
        <taxon>Bacilli</taxon>
        <taxon>Lactobacillales</taxon>
        <taxon>Lactobacillaceae</taxon>
        <taxon>Leuconostoc</taxon>
    </lineage>
</organism>
<feature type="chain" id="PRO_1000054485" description="Large ribosomal subunit protein uL15">
    <location>
        <begin position="1"/>
        <end position="144"/>
    </location>
</feature>
<feature type="region of interest" description="Disordered" evidence="2">
    <location>
        <begin position="1"/>
        <end position="44"/>
    </location>
</feature>
<feature type="compositionally biased region" description="Gly residues" evidence="2">
    <location>
        <begin position="23"/>
        <end position="35"/>
    </location>
</feature>
<keyword id="KW-1185">Reference proteome</keyword>
<keyword id="KW-0687">Ribonucleoprotein</keyword>
<keyword id="KW-0689">Ribosomal protein</keyword>
<keyword id="KW-0694">RNA-binding</keyword>
<keyword id="KW-0699">rRNA-binding</keyword>
<accession>Q03ZM7</accession>
<sequence length="144" mass="15440">MNLNELQPAAGSRHVRNRVGRGTSSGNGKTSGRGQKGQKARGKVRLGFEGGQMPLYRRIPKRGFTNISRKEFAVVNLNKLNSFDDGTEITPTLLIENGIVKNQKSGIKILAVGQLEKKLTVKAHKFSAAAVAAIEQAGGSTEVL</sequence>
<name>RL15_LEUMM</name>
<reference key="1">
    <citation type="journal article" date="2006" name="Proc. Natl. Acad. Sci. U.S.A.">
        <title>Comparative genomics of the lactic acid bacteria.</title>
        <authorList>
            <person name="Makarova K.S."/>
            <person name="Slesarev A."/>
            <person name="Wolf Y.I."/>
            <person name="Sorokin A."/>
            <person name="Mirkin B."/>
            <person name="Koonin E.V."/>
            <person name="Pavlov A."/>
            <person name="Pavlova N."/>
            <person name="Karamychev V."/>
            <person name="Polouchine N."/>
            <person name="Shakhova V."/>
            <person name="Grigoriev I."/>
            <person name="Lou Y."/>
            <person name="Rohksar D."/>
            <person name="Lucas S."/>
            <person name="Huang K."/>
            <person name="Goodstein D.M."/>
            <person name="Hawkins T."/>
            <person name="Plengvidhya V."/>
            <person name="Welker D."/>
            <person name="Hughes J."/>
            <person name="Goh Y."/>
            <person name="Benson A."/>
            <person name="Baldwin K."/>
            <person name="Lee J.-H."/>
            <person name="Diaz-Muniz I."/>
            <person name="Dosti B."/>
            <person name="Smeianov V."/>
            <person name="Wechter W."/>
            <person name="Barabote R."/>
            <person name="Lorca G."/>
            <person name="Altermann E."/>
            <person name="Barrangou R."/>
            <person name="Ganesan B."/>
            <person name="Xie Y."/>
            <person name="Rawsthorne H."/>
            <person name="Tamir D."/>
            <person name="Parker C."/>
            <person name="Breidt F."/>
            <person name="Broadbent J.R."/>
            <person name="Hutkins R."/>
            <person name="O'Sullivan D."/>
            <person name="Steele J."/>
            <person name="Unlu G."/>
            <person name="Saier M.H. Jr."/>
            <person name="Klaenhammer T."/>
            <person name="Richardson P."/>
            <person name="Kozyavkin S."/>
            <person name="Weimer B.C."/>
            <person name="Mills D.A."/>
        </authorList>
    </citation>
    <scope>NUCLEOTIDE SEQUENCE [LARGE SCALE GENOMIC DNA]</scope>
    <source>
        <strain>ATCC 8293 / DSM 20343 / BCRC 11652 / CCM 1803 / JCM 6124 / NCDO 523 / NBRC 100496 / NCIMB 8023 / NCTC 12954 / NRRL B-1118 / 37Y</strain>
    </source>
</reference>